<gene>
    <name type="primary">Mrps18b</name>
</gene>
<sequence>MAAPLRHTLLKLVPTLLRSSYVAQVPLQTLCTRGPPEEDAPSSLPVSPYESEPWKYLDSEEYHNRYGSRPVWADYRRNHKGGVPPQRTRKTCIRNNKVAGNPCPICRDHKLHVDFRNVKLLEQFVCAHTGIIFHAPYTGVCMKQHKKLTQAIQKARECGLLSYYVPQVEPRDADFGTVHGAVSVTPPAPTLLSGEPWYPWYSWQQPPERELSRLRRLYQGNLLEESGPPPESMPEMPTTPPAESSIEQPGSQSA</sequence>
<proteinExistence type="evidence at protein level"/>
<reference key="1">
    <citation type="journal article" date="2001" name="J. Biol. Chem.">
        <title>Proteomic analysis of the mammalian mitochondrial ribosome. Identification of protein components in the 28S small subunit.</title>
        <authorList>
            <person name="Suzuki T."/>
            <person name="Terasaki M."/>
            <person name="Takemoto-Hori C."/>
            <person name="Hanada T."/>
            <person name="Ueda T."/>
            <person name="Wada A."/>
            <person name="Watanabe K."/>
        </authorList>
    </citation>
    <scope>NUCLEOTIDE SEQUENCE [MRNA] (ISOFORM 1)</scope>
</reference>
<reference key="2">
    <citation type="journal article" date="2005" name="Science">
        <title>The transcriptional landscape of the mammalian genome.</title>
        <authorList>
            <person name="Carninci P."/>
            <person name="Kasukawa T."/>
            <person name="Katayama S."/>
            <person name="Gough J."/>
            <person name="Frith M.C."/>
            <person name="Maeda N."/>
            <person name="Oyama R."/>
            <person name="Ravasi T."/>
            <person name="Lenhard B."/>
            <person name="Wells C."/>
            <person name="Kodzius R."/>
            <person name="Shimokawa K."/>
            <person name="Bajic V.B."/>
            <person name="Brenner S.E."/>
            <person name="Batalov S."/>
            <person name="Forrest A.R."/>
            <person name="Zavolan M."/>
            <person name="Davis M.J."/>
            <person name="Wilming L.G."/>
            <person name="Aidinis V."/>
            <person name="Allen J.E."/>
            <person name="Ambesi-Impiombato A."/>
            <person name="Apweiler R."/>
            <person name="Aturaliya R.N."/>
            <person name="Bailey T.L."/>
            <person name="Bansal M."/>
            <person name="Baxter L."/>
            <person name="Beisel K.W."/>
            <person name="Bersano T."/>
            <person name="Bono H."/>
            <person name="Chalk A.M."/>
            <person name="Chiu K.P."/>
            <person name="Choudhary V."/>
            <person name="Christoffels A."/>
            <person name="Clutterbuck D.R."/>
            <person name="Crowe M.L."/>
            <person name="Dalla E."/>
            <person name="Dalrymple B.P."/>
            <person name="de Bono B."/>
            <person name="Della Gatta G."/>
            <person name="di Bernardo D."/>
            <person name="Down T."/>
            <person name="Engstrom P."/>
            <person name="Fagiolini M."/>
            <person name="Faulkner G."/>
            <person name="Fletcher C.F."/>
            <person name="Fukushima T."/>
            <person name="Furuno M."/>
            <person name="Futaki S."/>
            <person name="Gariboldi M."/>
            <person name="Georgii-Hemming P."/>
            <person name="Gingeras T.R."/>
            <person name="Gojobori T."/>
            <person name="Green R.E."/>
            <person name="Gustincich S."/>
            <person name="Harbers M."/>
            <person name="Hayashi Y."/>
            <person name="Hensch T.K."/>
            <person name="Hirokawa N."/>
            <person name="Hill D."/>
            <person name="Huminiecki L."/>
            <person name="Iacono M."/>
            <person name="Ikeo K."/>
            <person name="Iwama A."/>
            <person name="Ishikawa T."/>
            <person name="Jakt M."/>
            <person name="Kanapin A."/>
            <person name="Katoh M."/>
            <person name="Kawasawa Y."/>
            <person name="Kelso J."/>
            <person name="Kitamura H."/>
            <person name="Kitano H."/>
            <person name="Kollias G."/>
            <person name="Krishnan S.P."/>
            <person name="Kruger A."/>
            <person name="Kummerfeld S.K."/>
            <person name="Kurochkin I.V."/>
            <person name="Lareau L.F."/>
            <person name="Lazarevic D."/>
            <person name="Lipovich L."/>
            <person name="Liu J."/>
            <person name="Liuni S."/>
            <person name="McWilliam S."/>
            <person name="Madan Babu M."/>
            <person name="Madera M."/>
            <person name="Marchionni L."/>
            <person name="Matsuda H."/>
            <person name="Matsuzawa S."/>
            <person name="Miki H."/>
            <person name="Mignone F."/>
            <person name="Miyake S."/>
            <person name="Morris K."/>
            <person name="Mottagui-Tabar S."/>
            <person name="Mulder N."/>
            <person name="Nakano N."/>
            <person name="Nakauchi H."/>
            <person name="Ng P."/>
            <person name="Nilsson R."/>
            <person name="Nishiguchi S."/>
            <person name="Nishikawa S."/>
            <person name="Nori F."/>
            <person name="Ohara O."/>
            <person name="Okazaki Y."/>
            <person name="Orlando V."/>
            <person name="Pang K.C."/>
            <person name="Pavan W.J."/>
            <person name="Pavesi G."/>
            <person name="Pesole G."/>
            <person name="Petrovsky N."/>
            <person name="Piazza S."/>
            <person name="Reed J."/>
            <person name="Reid J.F."/>
            <person name="Ring B.Z."/>
            <person name="Ringwald M."/>
            <person name="Rost B."/>
            <person name="Ruan Y."/>
            <person name="Salzberg S.L."/>
            <person name="Sandelin A."/>
            <person name="Schneider C."/>
            <person name="Schoenbach C."/>
            <person name="Sekiguchi K."/>
            <person name="Semple C.A."/>
            <person name="Seno S."/>
            <person name="Sessa L."/>
            <person name="Sheng Y."/>
            <person name="Shibata Y."/>
            <person name="Shimada H."/>
            <person name="Shimada K."/>
            <person name="Silva D."/>
            <person name="Sinclair B."/>
            <person name="Sperling S."/>
            <person name="Stupka E."/>
            <person name="Sugiura K."/>
            <person name="Sultana R."/>
            <person name="Takenaka Y."/>
            <person name="Taki K."/>
            <person name="Tammoja K."/>
            <person name="Tan S.L."/>
            <person name="Tang S."/>
            <person name="Taylor M.S."/>
            <person name="Tegner J."/>
            <person name="Teichmann S.A."/>
            <person name="Ueda H.R."/>
            <person name="van Nimwegen E."/>
            <person name="Verardo R."/>
            <person name="Wei C.L."/>
            <person name="Yagi K."/>
            <person name="Yamanishi H."/>
            <person name="Zabarovsky E."/>
            <person name="Zhu S."/>
            <person name="Zimmer A."/>
            <person name="Hide W."/>
            <person name="Bult C."/>
            <person name="Grimmond S.M."/>
            <person name="Teasdale R.D."/>
            <person name="Liu E.T."/>
            <person name="Brusic V."/>
            <person name="Quackenbush J."/>
            <person name="Wahlestedt C."/>
            <person name="Mattick J.S."/>
            <person name="Hume D.A."/>
            <person name="Kai C."/>
            <person name="Sasaki D."/>
            <person name="Tomaru Y."/>
            <person name="Fukuda S."/>
            <person name="Kanamori-Katayama M."/>
            <person name="Suzuki M."/>
            <person name="Aoki J."/>
            <person name="Arakawa T."/>
            <person name="Iida J."/>
            <person name="Imamura K."/>
            <person name="Itoh M."/>
            <person name="Kato T."/>
            <person name="Kawaji H."/>
            <person name="Kawagashira N."/>
            <person name="Kawashima T."/>
            <person name="Kojima M."/>
            <person name="Kondo S."/>
            <person name="Konno H."/>
            <person name="Nakano K."/>
            <person name="Ninomiya N."/>
            <person name="Nishio T."/>
            <person name="Okada M."/>
            <person name="Plessy C."/>
            <person name="Shibata K."/>
            <person name="Shiraki T."/>
            <person name="Suzuki S."/>
            <person name="Tagami M."/>
            <person name="Waki K."/>
            <person name="Watahiki A."/>
            <person name="Okamura-Oho Y."/>
            <person name="Suzuki H."/>
            <person name="Kawai J."/>
            <person name="Hayashizaki Y."/>
        </authorList>
    </citation>
    <scope>NUCLEOTIDE SEQUENCE [LARGE SCALE MRNA] (ISOFORMS 1 AND 2)</scope>
    <source>
        <strain>C57BL/6J</strain>
        <tissue>Embryonic stem cell</tissue>
        <tissue>Kidney</tissue>
    </source>
</reference>
<reference key="3">
    <citation type="journal article" date="2004" name="Genome Res.">
        <title>The status, quality, and expansion of the NIH full-length cDNA project: the Mammalian Gene Collection (MGC).</title>
        <authorList>
            <consortium name="The MGC Project Team"/>
        </authorList>
    </citation>
    <scope>NUCLEOTIDE SEQUENCE [LARGE SCALE MRNA] (ISOFORM 1)</scope>
    <source>
        <tissue>Liver</tissue>
    </source>
</reference>
<reference key="4">
    <citation type="journal article" date="2010" name="Cell">
        <title>A tissue-specific atlas of mouse protein phosphorylation and expression.</title>
        <authorList>
            <person name="Huttlin E.L."/>
            <person name="Jedrychowski M.P."/>
            <person name="Elias J.E."/>
            <person name="Goswami T."/>
            <person name="Rad R."/>
            <person name="Beausoleil S.A."/>
            <person name="Villen J."/>
            <person name="Haas W."/>
            <person name="Sowa M.E."/>
            <person name="Gygi S.P."/>
        </authorList>
    </citation>
    <scope>IDENTIFICATION BY MASS SPECTROMETRY [LARGE SCALE ANALYSIS]</scope>
    <source>
        <tissue>Brain</tissue>
        <tissue>Brown adipose tissue</tissue>
        <tissue>Heart</tissue>
        <tissue>Kidney</tissue>
        <tissue>Liver</tissue>
        <tissue>Lung</tissue>
        <tissue>Spleen</tissue>
        <tissue>Testis</tissue>
    </source>
</reference>
<dbReference type="EMBL" id="AB049954">
    <property type="protein sequence ID" value="BAB41007.1"/>
    <property type="molecule type" value="mRNA"/>
</dbReference>
<dbReference type="EMBL" id="AK002554">
    <property type="status" value="NOT_ANNOTATED_CDS"/>
    <property type="molecule type" value="mRNA"/>
</dbReference>
<dbReference type="EMBL" id="AK010250">
    <property type="status" value="NOT_ANNOTATED_CDS"/>
    <property type="molecule type" value="mRNA"/>
</dbReference>
<dbReference type="EMBL" id="AK166597">
    <property type="protein sequence ID" value="BAE38883.1"/>
    <property type="molecule type" value="mRNA"/>
</dbReference>
<dbReference type="EMBL" id="BC021752">
    <property type="protein sequence ID" value="AAH21752.1"/>
    <property type="molecule type" value="mRNA"/>
</dbReference>
<dbReference type="CCDS" id="CCDS28712.1">
    <molecule id="Q99N84-1"/>
</dbReference>
<dbReference type="CCDS" id="CCDS84307.1">
    <molecule id="Q99N84-2"/>
</dbReference>
<dbReference type="RefSeq" id="NP_001334309.1">
    <molecule id="Q99N84-2"/>
    <property type="nucleotide sequence ID" value="NM_001347380.1"/>
</dbReference>
<dbReference type="RefSeq" id="NP_080154.1">
    <molecule id="Q99N84-1"/>
    <property type="nucleotide sequence ID" value="NM_025878.2"/>
</dbReference>
<dbReference type="PDB" id="7PNT">
    <property type="method" value="EM"/>
    <property type="resolution" value="3.19 A"/>
    <property type="chains" value="O=1-254"/>
</dbReference>
<dbReference type="PDB" id="7PNU">
    <property type="method" value="EM"/>
    <property type="resolution" value="3.06 A"/>
    <property type="chains" value="O=1-254"/>
</dbReference>
<dbReference type="PDB" id="7PNV">
    <property type="method" value="EM"/>
    <property type="resolution" value="3.06 A"/>
    <property type="chains" value="O=1-254"/>
</dbReference>
<dbReference type="PDB" id="7PNW">
    <property type="method" value="EM"/>
    <property type="resolution" value="3.09 A"/>
    <property type="chains" value="O=1-254"/>
</dbReference>
<dbReference type="PDBsum" id="7PNT"/>
<dbReference type="PDBsum" id="7PNU"/>
<dbReference type="PDBsum" id="7PNV"/>
<dbReference type="PDBsum" id="7PNW"/>
<dbReference type="EMDB" id="EMD-13551"/>
<dbReference type="EMDB" id="EMD-13552"/>
<dbReference type="EMDB" id="EMD-13553"/>
<dbReference type="EMDB" id="EMD-13554"/>
<dbReference type="SMR" id="Q99N84"/>
<dbReference type="BioGRID" id="211847">
    <property type="interactions" value="7"/>
</dbReference>
<dbReference type="ComplexPortal" id="CPX-5301">
    <property type="entry name" value="28S mitochondrial small ribosomal subunit"/>
</dbReference>
<dbReference type="FunCoup" id="Q99N84">
    <property type="interactions" value="928"/>
</dbReference>
<dbReference type="STRING" id="10090.ENSMUSP00000025305"/>
<dbReference type="GlyGen" id="Q99N84">
    <property type="glycosylation" value="1 site"/>
</dbReference>
<dbReference type="iPTMnet" id="Q99N84"/>
<dbReference type="PhosphoSitePlus" id="Q99N84"/>
<dbReference type="SwissPalm" id="Q99N84"/>
<dbReference type="PaxDb" id="10090-ENSMUSP00000025305"/>
<dbReference type="PeptideAtlas" id="Q99N84"/>
<dbReference type="ProteomicsDB" id="260940">
    <molecule id="Q99N84-1"/>
</dbReference>
<dbReference type="ProteomicsDB" id="260941">
    <molecule id="Q99N84-2"/>
</dbReference>
<dbReference type="Pumba" id="Q99N84"/>
<dbReference type="Antibodypedia" id="26399">
    <property type="antibodies" value="85 antibodies from 23 providers"/>
</dbReference>
<dbReference type="DNASU" id="66973"/>
<dbReference type="Ensembl" id="ENSMUST00000025305.16">
    <molecule id="Q99N84-1"/>
    <property type="protein sequence ID" value="ENSMUSP00000025305.10"/>
    <property type="gene ID" value="ENSMUSG00000024436.17"/>
</dbReference>
<dbReference type="Ensembl" id="ENSMUST00000113782.10">
    <molecule id="Q99N84-2"/>
    <property type="protein sequence ID" value="ENSMUSP00000109412.4"/>
    <property type="gene ID" value="ENSMUSG00000024436.17"/>
</dbReference>
<dbReference type="GeneID" id="66973"/>
<dbReference type="KEGG" id="mmu:66973"/>
<dbReference type="UCSC" id="uc008cjg.1">
    <molecule id="Q99N84-1"/>
    <property type="organism name" value="mouse"/>
</dbReference>
<dbReference type="AGR" id="MGI:1914223"/>
<dbReference type="CTD" id="28973"/>
<dbReference type="MGI" id="MGI:1914223">
    <property type="gene designation" value="Mrps18b"/>
</dbReference>
<dbReference type="VEuPathDB" id="HostDB:ENSMUSG00000024436"/>
<dbReference type="eggNOG" id="KOG4021">
    <property type="taxonomic scope" value="Eukaryota"/>
</dbReference>
<dbReference type="GeneTree" id="ENSGT00390000010554"/>
<dbReference type="HOGENOM" id="CLU_138628_0_0_1"/>
<dbReference type="InParanoid" id="Q99N84"/>
<dbReference type="OMA" id="RSAYGVQ"/>
<dbReference type="OrthoDB" id="21463at2759"/>
<dbReference type="PhylomeDB" id="Q99N84"/>
<dbReference type="TreeFam" id="TF315059"/>
<dbReference type="Reactome" id="R-MMU-5389840">
    <property type="pathway name" value="Mitochondrial translation elongation"/>
</dbReference>
<dbReference type="Reactome" id="R-MMU-5419276">
    <property type="pathway name" value="Mitochondrial translation termination"/>
</dbReference>
<dbReference type="BioGRID-ORCS" id="66973">
    <property type="hits" value="19 hits in 77 CRISPR screens"/>
</dbReference>
<dbReference type="ChiTaRS" id="Mrps18b">
    <property type="organism name" value="mouse"/>
</dbReference>
<dbReference type="PRO" id="PR:Q99N84"/>
<dbReference type="Proteomes" id="UP000000589">
    <property type="component" value="Chromosome 17"/>
</dbReference>
<dbReference type="RNAct" id="Q99N84">
    <property type="molecule type" value="protein"/>
</dbReference>
<dbReference type="Bgee" id="ENSMUSG00000024436">
    <property type="expression patterns" value="Expressed in blastoderm cell in morula and 70 other cell types or tissues"/>
</dbReference>
<dbReference type="ExpressionAtlas" id="Q99N84">
    <property type="expression patterns" value="baseline and differential"/>
</dbReference>
<dbReference type="GO" id="GO:0030054">
    <property type="term" value="C:cell junction"/>
    <property type="evidence" value="ECO:0007669"/>
    <property type="project" value="Ensembl"/>
</dbReference>
<dbReference type="GO" id="GO:0005743">
    <property type="term" value="C:mitochondrial inner membrane"/>
    <property type="evidence" value="ECO:0000303"/>
    <property type="project" value="ComplexPortal"/>
</dbReference>
<dbReference type="GO" id="GO:0005763">
    <property type="term" value="C:mitochondrial small ribosomal subunit"/>
    <property type="evidence" value="ECO:0000250"/>
    <property type="project" value="UniProtKB"/>
</dbReference>
<dbReference type="GO" id="GO:0005739">
    <property type="term" value="C:mitochondrion"/>
    <property type="evidence" value="ECO:0007005"/>
    <property type="project" value="MGI"/>
</dbReference>
<dbReference type="GO" id="GO:0005654">
    <property type="term" value="C:nucleoplasm"/>
    <property type="evidence" value="ECO:0007669"/>
    <property type="project" value="Ensembl"/>
</dbReference>
<dbReference type="GO" id="GO:0003735">
    <property type="term" value="F:structural constituent of ribosome"/>
    <property type="evidence" value="ECO:0000250"/>
    <property type="project" value="UniProtKB"/>
</dbReference>
<dbReference type="GO" id="GO:0032543">
    <property type="term" value="P:mitochondrial translation"/>
    <property type="evidence" value="ECO:0000250"/>
    <property type="project" value="UniProtKB"/>
</dbReference>
<dbReference type="FunFam" id="4.10.640.10:FF:000008">
    <property type="entry name" value="28S ribosomal protein S18b, mitochondrial"/>
    <property type="match status" value="1"/>
</dbReference>
<dbReference type="Gene3D" id="4.10.640.10">
    <property type="entry name" value="Ribosomal protein S18"/>
    <property type="match status" value="1"/>
</dbReference>
<dbReference type="InterPro" id="IPR040054">
    <property type="entry name" value="MRPS18B"/>
</dbReference>
<dbReference type="InterPro" id="IPR001648">
    <property type="entry name" value="Ribosomal_bS18"/>
</dbReference>
<dbReference type="InterPro" id="IPR036870">
    <property type="entry name" value="Ribosomal_bS18_sf"/>
</dbReference>
<dbReference type="PANTHER" id="PTHR13329">
    <property type="entry name" value="MITOCHONDRIAL RIBOSOMAL PROTEIN S18B"/>
    <property type="match status" value="1"/>
</dbReference>
<dbReference type="PANTHER" id="PTHR13329:SF2">
    <property type="entry name" value="SMALL RIBOSOMAL SUBUNIT PROTEIN MS40"/>
    <property type="match status" value="1"/>
</dbReference>
<dbReference type="Pfam" id="PF01084">
    <property type="entry name" value="Ribosomal_S18"/>
    <property type="match status" value="1"/>
</dbReference>
<dbReference type="SUPFAM" id="SSF46911">
    <property type="entry name" value="Ribosomal protein S18"/>
    <property type="match status" value="1"/>
</dbReference>
<feature type="transit peptide" description="Mitochondrion" evidence="1">
    <location>
        <begin position="1"/>
        <end position="33"/>
    </location>
</feature>
<feature type="chain" id="PRO_0000030628" description="Small ribosomal subunit protein mS40">
    <location>
        <begin position="34"/>
        <end position="254"/>
    </location>
</feature>
<feature type="region of interest" description="Disordered" evidence="3">
    <location>
        <begin position="218"/>
        <end position="254"/>
    </location>
</feature>
<feature type="compositionally biased region" description="Pro residues" evidence="3">
    <location>
        <begin position="227"/>
        <end position="240"/>
    </location>
</feature>
<feature type="modified residue" description="Phosphoserine" evidence="2">
    <location>
        <position position="47"/>
    </location>
</feature>
<feature type="splice variant" id="VSP_005723" description="In isoform 2." evidence="4">
    <location>
        <begin position="25"/>
        <end position="116"/>
    </location>
</feature>
<keyword id="KW-0002">3D-structure</keyword>
<keyword id="KW-0025">Alternative splicing</keyword>
<keyword id="KW-0496">Mitochondrion</keyword>
<keyword id="KW-0597">Phosphoprotein</keyword>
<keyword id="KW-1185">Reference proteome</keyword>
<keyword id="KW-0687">Ribonucleoprotein</keyword>
<keyword id="KW-0689">Ribosomal protein</keyword>
<keyword id="KW-0809">Transit peptide</keyword>
<comment type="subunit">
    <text evidence="2">Component of the mitochondrial ribosome small subunit (28S) which comprises a 12S rRNA and about 30 distinct proteins.</text>
</comment>
<comment type="subcellular location">
    <subcellularLocation>
        <location evidence="2">Mitochondrion</location>
    </subcellularLocation>
</comment>
<comment type="alternative products">
    <event type="alternative splicing"/>
    <isoform>
        <id>Q99N84-1</id>
        <name>1</name>
        <sequence type="displayed"/>
    </isoform>
    <isoform>
        <id>Q99N84-2</id>
        <name>2</name>
        <sequence type="described" ref="VSP_005723"/>
    </isoform>
</comment>
<comment type="similarity">
    <text evidence="5">Belongs to the bacterial ribosomal protein bS18 family. Mitochondrion-specific ribosomal protein mS40 subfamily.</text>
</comment>
<comment type="sequence caution" evidence="5">
    <conflict type="frameshift">
        <sequence resource="EMBL" id="AK010250"/>
    </conflict>
</comment>
<accession>Q99N84</accession>
<accession>Q3TLA9</accession>
<accession>Q9CRK0</accession>
<accession>Q9DCR8</accession>
<protein>
    <recommendedName>
        <fullName evidence="5">Small ribosomal subunit protein mS40</fullName>
    </recommendedName>
    <alternativeName>
        <fullName>28S ribosomal protein S18-2, mitochondrial</fullName>
        <shortName>MRP-S18-2</shortName>
    </alternativeName>
    <alternativeName>
        <fullName>28S ribosomal protein S18b, mitochondrial</fullName>
        <shortName>MRP-S18-b</shortName>
        <shortName>Mrps18-b</shortName>
        <shortName>S18mt-b</shortName>
    </alternativeName>
</protein>
<organism>
    <name type="scientific">Mus musculus</name>
    <name type="common">Mouse</name>
    <dbReference type="NCBI Taxonomy" id="10090"/>
    <lineage>
        <taxon>Eukaryota</taxon>
        <taxon>Metazoa</taxon>
        <taxon>Chordata</taxon>
        <taxon>Craniata</taxon>
        <taxon>Vertebrata</taxon>
        <taxon>Euteleostomi</taxon>
        <taxon>Mammalia</taxon>
        <taxon>Eutheria</taxon>
        <taxon>Euarchontoglires</taxon>
        <taxon>Glires</taxon>
        <taxon>Rodentia</taxon>
        <taxon>Myomorpha</taxon>
        <taxon>Muroidea</taxon>
        <taxon>Muridae</taxon>
        <taxon>Murinae</taxon>
        <taxon>Mus</taxon>
        <taxon>Mus</taxon>
    </lineage>
</organism>
<evidence type="ECO:0000250" key="1">
    <source>
        <dbReference type="UniProtKB" id="P82918"/>
    </source>
</evidence>
<evidence type="ECO:0000250" key="2">
    <source>
        <dbReference type="UniProtKB" id="Q9Y676"/>
    </source>
</evidence>
<evidence type="ECO:0000256" key="3">
    <source>
        <dbReference type="SAM" id="MobiDB-lite"/>
    </source>
</evidence>
<evidence type="ECO:0000303" key="4">
    <source>
    </source>
</evidence>
<evidence type="ECO:0000305" key="5"/>
<name>RT18B_MOUSE</name>